<comment type="function">
    <text evidence="1">Part of a sulfur-relay system required for 2-thiolation of 5-methylaminomethyl-2-thiouridine (mnm(5)s(2)U) at tRNA wobble positions.</text>
</comment>
<comment type="subunit">
    <text evidence="1">Heterohexamer, formed by a dimer of trimers. The hexameric TusBCD complex contains 2 copies each of TusB, TusC and TusD. The TusBCD complex interacts with TusE.</text>
</comment>
<comment type="subcellular location">
    <subcellularLocation>
        <location evidence="1">Cytoplasm</location>
    </subcellularLocation>
</comment>
<comment type="similarity">
    <text evidence="1">Belongs to the DsrF/TusC family.</text>
</comment>
<proteinExistence type="inferred from homology"/>
<sequence length="119" mass="13328">MKRVAFVFTHSPHGSTSGREGLDALLAMSALTEEIGVFFVGDGVLQLLPHQQPEKILMRNYIATFGVLPLYDIECCYLCEASVRQRGLSIDTNWVLDVELLAPKAWRSKLADYHSILSF</sequence>
<accession>Q6CZW1</accession>
<organism>
    <name type="scientific">Pectobacterium atrosepticum (strain SCRI 1043 / ATCC BAA-672)</name>
    <name type="common">Erwinia carotovora subsp. atroseptica</name>
    <dbReference type="NCBI Taxonomy" id="218491"/>
    <lineage>
        <taxon>Bacteria</taxon>
        <taxon>Pseudomonadati</taxon>
        <taxon>Pseudomonadota</taxon>
        <taxon>Gammaproteobacteria</taxon>
        <taxon>Enterobacterales</taxon>
        <taxon>Pectobacteriaceae</taxon>
        <taxon>Pectobacterium</taxon>
    </lineage>
</organism>
<name>TUSC_PECAS</name>
<evidence type="ECO:0000255" key="1">
    <source>
        <dbReference type="HAMAP-Rule" id="MF_00389"/>
    </source>
</evidence>
<gene>
    <name evidence="1" type="primary">tusC</name>
    <name type="ordered locus">ECA4040</name>
</gene>
<dbReference type="EMBL" id="BX950851">
    <property type="protein sequence ID" value="CAG76937.1"/>
    <property type="molecule type" value="Genomic_DNA"/>
</dbReference>
<dbReference type="RefSeq" id="WP_011095516.1">
    <property type="nucleotide sequence ID" value="NC_004547.2"/>
</dbReference>
<dbReference type="SMR" id="Q6CZW1"/>
<dbReference type="STRING" id="218491.ECA4040"/>
<dbReference type="GeneID" id="57210704"/>
<dbReference type="KEGG" id="eca:ECA4040"/>
<dbReference type="PATRIC" id="fig|218491.5.peg.4106"/>
<dbReference type="eggNOG" id="COG2923">
    <property type="taxonomic scope" value="Bacteria"/>
</dbReference>
<dbReference type="HOGENOM" id="CLU_155943_1_0_6"/>
<dbReference type="OrthoDB" id="9789418at2"/>
<dbReference type="Proteomes" id="UP000007966">
    <property type="component" value="Chromosome"/>
</dbReference>
<dbReference type="GO" id="GO:0005737">
    <property type="term" value="C:cytoplasm"/>
    <property type="evidence" value="ECO:0007669"/>
    <property type="project" value="UniProtKB-SubCell"/>
</dbReference>
<dbReference type="GO" id="GO:0008033">
    <property type="term" value="P:tRNA processing"/>
    <property type="evidence" value="ECO:0007669"/>
    <property type="project" value="UniProtKB-UniRule"/>
</dbReference>
<dbReference type="Gene3D" id="3.40.1260.10">
    <property type="entry name" value="DsrEFH-like"/>
    <property type="match status" value="1"/>
</dbReference>
<dbReference type="HAMAP" id="MF_00389">
    <property type="entry name" value="Thiourid_synth_C"/>
    <property type="match status" value="1"/>
</dbReference>
<dbReference type="InterPro" id="IPR027396">
    <property type="entry name" value="DsrEFH-like"/>
</dbReference>
<dbReference type="InterPro" id="IPR003787">
    <property type="entry name" value="Sulphur_relay_DsrE/F-like"/>
</dbReference>
<dbReference type="InterPro" id="IPR037450">
    <property type="entry name" value="Sulphur_relay_TusC"/>
</dbReference>
<dbReference type="InterPro" id="IPR017462">
    <property type="entry name" value="Sulphur_relay_TusC/DsrF"/>
</dbReference>
<dbReference type="NCBIfam" id="NF001238">
    <property type="entry name" value="PRK00211.1"/>
    <property type="match status" value="1"/>
</dbReference>
<dbReference type="NCBIfam" id="TIGR03010">
    <property type="entry name" value="sulf_tusC_dsrF"/>
    <property type="match status" value="1"/>
</dbReference>
<dbReference type="PANTHER" id="PTHR38780">
    <property type="entry name" value="PROTEIN TUSC"/>
    <property type="match status" value="1"/>
</dbReference>
<dbReference type="PANTHER" id="PTHR38780:SF1">
    <property type="entry name" value="PROTEIN TUSC"/>
    <property type="match status" value="1"/>
</dbReference>
<dbReference type="Pfam" id="PF02635">
    <property type="entry name" value="DsrE"/>
    <property type="match status" value="1"/>
</dbReference>
<dbReference type="SUPFAM" id="SSF75169">
    <property type="entry name" value="DsrEFH-like"/>
    <property type="match status" value="1"/>
</dbReference>
<keyword id="KW-0963">Cytoplasm</keyword>
<keyword id="KW-1185">Reference proteome</keyword>
<keyword id="KW-0819">tRNA processing</keyword>
<protein>
    <recommendedName>
        <fullName evidence="1">Protein TusC</fullName>
    </recommendedName>
    <alternativeName>
        <fullName evidence="1">tRNA 2-thiouridine synthesizing protein C</fullName>
    </alternativeName>
</protein>
<reference key="1">
    <citation type="journal article" date="2004" name="Proc. Natl. Acad. Sci. U.S.A.">
        <title>Genome sequence of the enterobacterial phytopathogen Erwinia carotovora subsp. atroseptica and characterization of virulence factors.</title>
        <authorList>
            <person name="Bell K.S."/>
            <person name="Sebaihia M."/>
            <person name="Pritchard L."/>
            <person name="Holden M.T.G."/>
            <person name="Hyman L.J."/>
            <person name="Holeva M.C."/>
            <person name="Thomson N.R."/>
            <person name="Bentley S.D."/>
            <person name="Churcher L.J.C."/>
            <person name="Mungall K."/>
            <person name="Atkin R."/>
            <person name="Bason N."/>
            <person name="Brooks K."/>
            <person name="Chillingworth T."/>
            <person name="Clark K."/>
            <person name="Doggett J."/>
            <person name="Fraser A."/>
            <person name="Hance Z."/>
            <person name="Hauser H."/>
            <person name="Jagels K."/>
            <person name="Moule S."/>
            <person name="Norbertczak H."/>
            <person name="Ormond D."/>
            <person name="Price C."/>
            <person name="Quail M.A."/>
            <person name="Sanders M."/>
            <person name="Walker D."/>
            <person name="Whitehead S."/>
            <person name="Salmond G.P.C."/>
            <person name="Birch P.R.J."/>
            <person name="Parkhill J."/>
            <person name="Toth I.K."/>
        </authorList>
    </citation>
    <scope>NUCLEOTIDE SEQUENCE [LARGE SCALE GENOMIC DNA]</scope>
    <source>
        <strain>SCRI 1043 / ATCC BAA-672</strain>
    </source>
</reference>
<feature type="chain" id="PRO_0000234452" description="Protein TusC">
    <location>
        <begin position="1"/>
        <end position="119"/>
    </location>
</feature>